<dbReference type="EC" id="1.18.1.-" evidence="1"/>
<dbReference type="EMBL" id="CP000462">
    <property type="protein sequence ID" value="ABK37047.1"/>
    <property type="molecule type" value="Genomic_DNA"/>
</dbReference>
<dbReference type="RefSeq" id="WP_011704148.1">
    <property type="nucleotide sequence ID" value="NC_008570.1"/>
</dbReference>
<dbReference type="RefSeq" id="YP_854651.1">
    <property type="nucleotide sequence ID" value="NC_008570.1"/>
</dbReference>
<dbReference type="SMR" id="A0KEJ2"/>
<dbReference type="STRING" id="380703.AHA_0120"/>
<dbReference type="EnsemblBacteria" id="ABK37047">
    <property type="protein sequence ID" value="ABK37047"/>
    <property type="gene ID" value="AHA_0120"/>
</dbReference>
<dbReference type="GeneID" id="4487500"/>
<dbReference type="KEGG" id="aha:AHA_0120"/>
<dbReference type="PATRIC" id="fig|380703.7.peg.113"/>
<dbReference type="eggNOG" id="COG0446">
    <property type="taxonomic scope" value="Bacteria"/>
</dbReference>
<dbReference type="HOGENOM" id="CLU_003291_4_4_6"/>
<dbReference type="OrthoDB" id="9808980at2"/>
<dbReference type="UniPathway" id="UPA00638"/>
<dbReference type="Proteomes" id="UP000000756">
    <property type="component" value="Chromosome"/>
</dbReference>
<dbReference type="GO" id="GO:0005737">
    <property type="term" value="C:cytoplasm"/>
    <property type="evidence" value="ECO:0007669"/>
    <property type="project" value="UniProtKB-SubCell"/>
</dbReference>
<dbReference type="GO" id="GO:0016731">
    <property type="term" value="F:oxidoreductase activity, acting on iron-sulfur proteins as donors, NAD or NADP as acceptor"/>
    <property type="evidence" value="ECO:0007669"/>
    <property type="project" value="UniProtKB-UniRule"/>
</dbReference>
<dbReference type="Gene3D" id="3.30.390.120">
    <property type="match status" value="1"/>
</dbReference>
<dbReference type="Gene3D" id="3.50.50.60">
    <property type="entry name" value="FAD/NAD(P)-binding domain"/>
    <property type="match status" value="2"/>
</dbReference>
<dbReference type="HAMAP" id="MF_01313">
    <property type="entry name" value="NorW"/>
    <property type="match status" value="1"/>
</dbReference>
<dbReference type="InterPro" id="IPR050260">
    <property type="entry name" value="FAD-bd_OxRdtase"/>
</dbReference>
<dbReference type="InterPro" id="IPR036188">
    <property type="entry name" value="FAD/NAD-bd_sf"/>
</dbReference>
<dbReference type="InterPro" id="IPR023753">
    <property type="entry name" value="FAD/NAD-binding_dom"/>
</dbReference>
<dbReference type="InterPro" id="IPR023961">
    <property type="entry name" value="NO_rdtase_NorW"/>
</dbReference>
<dbReference type="InterPro" id="IPR041364">
    <property type="entry name" value="Rbx-bd"/>
</dbReference>
<dbReference type="NCBIfam" id="NF003437">
    <property type="entry name" value="PRK04965.1"/>
    <property type="match status" value="1"/>
</dbReference>
<dbReference type="PANTHER" id="PTHR43429:SF3">
    <property type="entry name" value="NITRITE REDUCTASE [NAD(P)H]"/>
    <property type="match status" value="1"/>
</dbReference>
<dbReference type="PANTHER" id="PTHR43429">
    <property type="entry name" value="PYRIDINE NUCLEOTIDE-DISULFIDE OXIDOREDUCTASE DOMAIN-CONTAINING"/>
    <property type="match status" value="1"/>
</dbReference>
<dbReference type="Pfam" id="PF07992">
    <property type="entry name" value="Pyr_redox_2"/>
    <property type="match status" value="1"/>
</dbReference>
<dbReference type="Pfam" id="PF18113">
    <property type="entry name" value="Rbx_binding"/>
    <property type="match status" value="1"/>
</dbReference>
<dbReference type="PRINTS" id="PR00368">
    <property type="entry name" value="FADPNR"/>
</dbReference>
<dbReference type="PRINTS" id="PR00411">
    <property type="entry name" value="PNDRDTASEI"/>
</dbReference>
<dbReference type="SUPFAM" id="SSF51905">
    <property type="entry name" value="FAD/NAD(P)-binding domain"/>
    <property type="match status" value="1"/>
</dbReference>
<proteinExistence type="inferred from homology"/>
<reference key="1">
    <citation type="journal article" date="2006" name="J. Bacteriol.">
        <title>Genome sequence of Aeromonas hydrophila ATCC 7966T: jack of all trades.</title>
        <authorList>
            <person name="Seshadri R."/>
            <person name="Joseph S.W."/>
            <person name="Chopra A.K."/>
            <person name="Sha J."/>
            <person name="Shaw J."/>
            <person name="Graf J."/>
            <person name="Haft D.H."/>
            <person name="Wu M."/>
            <person name="Ren Q."/>
            <person name="Rosovitz M.J."/>
            <person name="Madupu R."/>
            <person name="Tallon L."/>
            <person name="Kim M."/>
            <person name="Jin S."/>
            <person name="Vuong H."/>
            <person name="Stine O.C."/>
            <person name="Ali A."/>
            <person name="Horneman A.J."/>
            <person name="Heidelberg J.F."/>
        </authorList>
    </citation>
    <scope>NUCLEOTIDE SEQUENCE [LARGE SCALE GENOMIC DNA]</scope>
    <source>
        <strain>ATCC 7966 / DSM 30187 / BCRC 13018 / CCUG 14551 / JCM 1027 / KCTC 2358 / NCIMB 9240 / NCTC 8049</strain>
    </source>
</reference>
<accession>A0KEJ2</accession>
<organism>
    <name type="scientific">Aeromonas hydrophila subsp. hydrophila (strain ATCC 7966 / DSM 30187 / BCRC 13018 / CCUG 14551 / JCM 1027 / KCTC 2358 / NCIMB 9240 / NCTC 8049)</name>
    <dbReference type="NCBI Taxonomy" id="380703"/>
    <lineage>
        <taxon>Bacteria</taxon>
        <taxon>Pseudomonadati</taxon>
        <taxon>Pseudomonadota</taxon>
        <taxon>Gammaproteobacteria</taxon>
        <taxon>Aeromonadales</taxon>
        <taxon>Aeromonadaceae</taxon>
        <taxon>Aeromonas</taxon>
    </lineage>
</organism>
<protein>
    <recommendedName>
        <fullName evidence="1">Nitric oxide reductase FlRd-NAD(+) reductase</fullName>
        <ecNumber evidence="1">1.18.1.-</ecNumber>
    </recommendedName>
    <alternativeName>
        <fullName evidence="1">Flavorubredoxin reductase</fullName>
        <shortName evidence="1">FlRd-reductase</shortName>
        <shortName evidence="1">FlavoRb reductase</shortName>
    </alternativeName>
</protein>
<feature type="chain" id="PRO_0000305603" description="Nitric oxide reductase FlRd-NAD(+) reductase">
    <location>
        <begin position="1"/>
        <end position="388"/>
    </location>
</feature>
<sequence length="388" mass="41275">MSTTTQSDAGISREIVVIGSGFAAQQLVKSLRKLDAEQPIRLITADSGDEYNKPDLSHVVSRGCAAAAMTRQSGSDFAEQQRIALLPHCPVLGIDPVRRLVLTEQGEFPYGQLVLATGASAVRPELPGSEHLVTLNSQQEYAAVEGAIQQARRILVLGAGLIGCELAMDMASDGREVTLLDLADSPLSALLPATLTQPLQQALRSQGVSLQFGTGLARIDGQPGDGWRVTLTDGRTSEQDLVIAAIGLRPNLALARGAGLAVERGILVGDRLQTSDPHIFALGDCVQWQGQLLPFLQPIVLGANALARTLLGTPTPLALPPMLVKVKTPRYPLQLAGRTQGEDLAWQCRWNSHGMVAEARDQAGELCGFVVGGDQMSAAFPLLRQLPR</sequence>
<keyword id="KW-0963">Cytoplasm</keyword>
<keyword id="KW-0274">FAD</keyword>
<keyword id="KW-0285">Flavoprotein</keyword>
<keyword id="KW-0520">NAD</keyword>
<keyword id="KW-0560">Oxidoreductase</keyword>
<keyword id="KW-1185">Reference proteome</keyword>
<comment type="function">
    <text evidence="1">One of at least two accessory proteins for anaerobic nitric oxide (NO) reductase. Reduces the rubredoxin moiety of NO reductase.</text>
</comment>
<comment type="catalytic activity">
    <reaction evidence="1">
        <text>2 reduced [nitric oxide reductase rubredoxin domain] + NAD(+) + H(+) = 2 oxidized [nitric oxide reductase rubredoxin domain] + NADH</text>
        <dbReference type="Rhea" id="RHEA:42960"/>
        <dbReference type="Rhea" id="RHEA-COMP:10304"/>
        <dbReference type="Rhea" id="RHEA-COMP:10305"/>
        <dbReference type="ChEBI" id="CHEBI:15378"/>
        <dbReference type="ChEBI" id="CHEBI:29033"/>
        <dbReference type="ChEBI" id="CHEBI:29034"/>
        <dbReference type="ChEBI" id="CHEBI:57540"/>
        <dbReference type="ChEBI" id="CHEBI:57945"/>
    </reaction>
</comment>
<comment type="cofactor">
    <cofactor evidence="1">
        <name>FAD</name>
        <dbReference type="ChEBI" id="CHEBI:57692"/>
    </cofactor>
</comment>
<comment type="pathway">
    <text evidence="1">Nitrogen metabolism; nitric oxide reduction.</text>
</comment>
<comment type="subcellular location">
    <subcellularLocation>
        <location evidence="1">Cytoplasm</location>
    </subcellularLocation>
</comment>
<comment type="similarity">
    <text evidence="1">Belongs to the FAD-dependent oxidoreductase family.</text>
</comment>
<name>NORW_AERHH</name>
<evidence type="ECO:0000255" key="1">
    <source>
        <dbReference type="HAMAP-Rule" id="MF_01313"/>
    </source>
</evidence>
<gene>
    <name evidence="1" type="primary">norW</name>
    <name evidence="1" type="synonym">flrR</name>
    <name type="ordered locus">AHA_0120</name>
</gene>